<geneLocation type="chloroplast"/>
<proteinExistence type="inferred from homology"/>
<dbReference type="EC" id="7.1.1.-" evidence="1"/>
<dbReference type="EMBL" id="EF489041">
    <property type="protein sequence ID" value="ABO36752.1"/>
    <property type="molecule type" value="Genomic_DNA"/>
</dbReference>
<dbReference type="SMR" id="P0CD34"/>
<dbReference type="FunCoup" id="P0CD34">
    <property type="interactions" value="16"/>
</dbReference>
<dbReference type="STRING" id="3694.P0CD34"/>
<dbReference type="KEGG" id="pop:4929721"/>
<dbReference type="KEGG" id="pop:4929763"/>
<dbReference type="eggNOG" id="KOG4668">
    <property type="taxonomic scope" value="Eukaryota"/>
</dbReference>
<dbReference type="InParanoid" id="P0CD34"/>
<dbReference type="OrthoDB" id="1621789at2759"/>
<dbReference type="Proteomes" id="UP000006729">
    <property type="component" value="Chloroplast"/>
</dbReference>
<dbReference type="ExpressionAtlas" id="P0CD34">
    <property type="expression patterns" value="differential"/>
</dbReference>
<dbReference type="GO" id="GO:0009535">
    <property type="term" value="C:chloroplast thylakoid membrane"/>
    <property type="evidence" value="ECO:0007669"/>
    <property type="project" value="UniProtKB-SubCell"/>
</dbReference>
<dbReference type="GO" id="GO:0008137">
    <property type="term" value="F:NADH dehydrogenase (ubiquinone) activity"/>
    <property type="evidence" value="ECO:0007669"/>
    <property type="project" value="InterPro"/>
</dbReference>
<dbReference type="GO" id="GO:0048038">
    <property type="term" value="F:quinone binding"/>
    <property type="evidence" value="ECO:0007669"/>
    <property type="project" value="UniProtKB-KW"/>
</dbReference>
<dbReference type="GO" id="GO:0042773">
    <property type="term" value="P:ATP synthesis coupled electron transport"/>
    <property type="evidence" value="ECO:0007669"/>
    <property type="project" value="InterPro"/>
</dbReference>
<dbReference type="GO" id="GO:0019684">
    <property type="term" value="P:photosynthesis, light reaction"/>
    <property type="evidence" value="ECO:0007669"/>
    <property type="project" value="UniProtKB-UniRule"/>
</dbReference>
<dbReference type="HAMAP" id="MF_00445">
    <property type="entry name" value="NDH1_NuoN_1"/>
    <property type="match status" value="1"/>
</dbReference>
<dbReference type="InterPro" id="IPR010096">
    <property type="entry name" value="NADH-Q_OxRdtase_suN/2"/>
</dbReference>
<dbReference type="InterPro" id="IPR001750">
    <property type="entry name" value="ND/Mrp_TM"/>
</dbReference>
<dbReference type="InterPro" id="IPR045693">
    <property type="entry name" value="Ndh2_N"/>
</dbReference>
<dbReference type="NCBIfam" id="TIGR01770">
    <property type="entry name" value="NDH_I_N"/>
    <property type="match status" value="1"/>
</dbReference>
<dbReference type="NCBIfam" id="NF002701">
    <property type="entry name" value="PRK02504.1"/>
    <property type="match status" value="1"/>
</dbReference>
<dbReference type="PANTHER" id="PTHR22773">
    <property type="entry name" value="NADH DEHYDROGENASE"/>
    <property type="match status" value="1"/>
</dbReference>
<dbReference type="Pfam" id="PF19530">
    <property type="entry name" value="Ndh2_N"/>
    <property type="match status" value="1"/>
</dbReference>
<dbReference type="Pfam" id="PF00361">
    <property type="entry name" value="Proton_antipo_M"/>
    <property type="match status" value="1"/>
</dbReference>
<dbReference type="PRINTS" id="PR01434">
    <property type="entry name" value="NADHDHGNASE5"/>
</dbReference>
<gene>
    <name evidence="1" type="primary">ndhB1</name>
    <name type="ordered locus">Poptr_cp069</name>
</gene>
<keyword id="KW-0150">Chloroplast</keyword>
<keyword id="KW-0472">Membrane</keyword>
<keyword id="KW-0520">NAD</keyword>
<keyword id="KW-0521">NADP</keyword>
<keyword id="KW-0934">Plastid</keyword>
<keyword id="KW-0618">Plastoquinone</keyword>
<keyword id="KW-0874">Quinone</keyword>
<keyword id="KW-1185">Reference proteome</keyword>
<keyword id="KW-0793">Thylakoid</keyword>
<keyword id="KW-1278">Translocase</keyword>
<keyword id="KW-0812">Transmembrane</keyword>
<keyword id="KW-1133">Transmembrane helix</keyword>
<keyword id="KW-0813">Transport</keyword>
<comment type="function">
    <text evidence="1">NDH shuttles electrons from NAD(P)H:plastoquinone, via FMN and iron-sulfur (Fe-S) centers, to quinones in the photosynthetic chain and possibly in a chloroplast respiratory chain. The immediate electron acceptor for the enzyme in this species is believed to be plastoquinone. Couples the redox reaction to proton translocation, and thus conserves the redox energy in a proton gradient.</text>
</comment>
<comment type="catalytic activity">
    <reaction evidence="1">
        <text>a plastoquinone + NADH + (n+1) H(+)(in) = a plastoquinol + NAD(+) + n H(+)(out)</text>
        <dbReference type="Rhea" id="RHEA:42608"/>
        <dbReference type="Rhea" id="RHEA-COMP:9561"/>
        <dbReference type="Rhea" id="RHEA-COMP:9562"/>
        <dbReference type="ChEBI" id="CHEBI:15378"/>
        <dbReference type="ChEBI" id="CHEBI:17757"/>
        <dbReference type="ChEBI" id="CHEBI:57540"/>
        <dbReference type="ChEBI" id="CHEBI:57945"/>
        <dbReference type="ChEBI" id="CHEBI:62192"/>
    </reaction>
</comment>
<comment type="catalytic activity">
    <reaction evidence="1">
        <text>a plastoquinone + NADPH + (n+1) H(+)(in) = a plastoquinol + NADP(+) + n H(+)(out)</text>
        <dbReference type="Rhea" id="RHEA:42612"/>
        <dbReference type="Rhea" id="RHEA-COMP:9561"/>
        <dbReference type="Rhea" id="RHEA-COMP:9562"/>
        <dbReference type="ChEBI" id="CHEBI:15378"/>
        <dbReference type="ChEBI" id="CHEBI:17757"/>
        <dbReference type="ChEBI" id="CHEBI:57783"/>
        <dbReference type="ChEBI" id="CHEBI:58349"/>
        <dbReference type="ChEBI" id="CHEBI:62192"/>
    </reaction>
</comment>
<comment type="subunit">
    <text evidence="1">NDH is composed of at least 16 different subunits, 5 of which are encoded in the nucleus.</text>
</comment>
<comment type="subcellular location">
    <subcellularLocation>
        <location evidence="1">Plastid</location>
        <location evidence="1">Chloroplast thylakoid membrane</location>
        <topology evidence="1">Multi-pass membrane protein</topology>
    </subcellularLocation>
</comment>
<comment type="similarity">
    <text evidence="1">Belongs to the complex I subunit 2 family.</text>
</comment>
<name>NU2C1_POPTR</name>
<organism>
    <name type="scientific">Populus trichocarpa</name>
    <name type="common">Western balsam poplar</name>
    <name type="synonym">Populus balsamifera subsp. trichocarpa</name>
    <dbReference type="NCBI Taxonomy" id="3694"/>
    <lineage>
        <taxon>Eukaryota</taxon>
        <taxon>Viridiplantae</taxon>
        <taxon>Streptophyta</taxon>
        <taxon>Embryophyta</taxon>
        <taxon>Tracheophyta</taxon>
        <taxon>Spermatophyta</taxon>
        <taxon>Magnoliopsida</taxon>
        <taxon>eudicotyledons</taxon>
        <taxon>Gunneridae</taxon>
        <taxon>Pentapetalae</taxon>
        <taxon>rosids</taxon>
        <taxon>fabids</taxon>
        <taxon>Malpighiales</taxon>
        <taxon>Salicaceae</taxon>
        <taxon>Saliceae</taxon>
        <taxon>Populus</taxon>
    </lineage>
</organism>
<evidence type="ECO:0000255" key="1">
    <source>
        <dbReference type="HAMAP-Rule" id="MF_00445"/>
    </source>
</evidence>
<protein>
    <recommendedName>
        <fullName evidence="1">NAD(P)H-quinone oxidoreductase subunit 2 A, chloroplastic</fullName>
        <ecNumber evidence="1">7.1.1.-</ecNumber>
    </recommendedName>
    <alternativeName>
        <fullName evidence="1">NAD(P)H dehydrogenase, subunit 2 A</fullName>
    </alternativeName>
    <alternativeName>
        <fullName evidence="1">NADH-plastoquinone oxidoreductase subunit 2 A</fullName>
    </alternativeName>
</protein>
<sequence>MIWHVQNENFILDSTRIFMKAFHLLLFDGSFIFPECILIFGLILLLMIDSTSDQKDMPWLYFISSTSLVMSITALLFRWREEPMISFSGNFQTNNFNEIFQFLILLCSTLCIPLSVEYIECTEMAITEFLLFVLTATLGGMFLCGANDLITIFVAPECFSLCSYLLSGYTKKDVRSNEATTKYLLMGGASSSILVHGFSWLYGSSGGEIELQEIVNGLINTQMYNSPGISIALIFITVGIGFKLSPAPSHQWTPDVYEGSPTPVVAFLSVTSKVAASASATRIFDIPFYFSSNEWHLLLEILAILSMIVGNLIAITQTSMKRMLAYSSIGQIGYVIIGIIVGDSNGGYASMITYMLFYISMNLGTFACIVLFGLRTGTDNIRDYAGLYTKDPFLALSLALCLLSLGGLPPLAGFFGKLHLFWCGWQAGLYFLVSIGLLTSVLSIYYYLKIIKLLMTGQNQEITPHVRNYRGSPLRSNNSIELSMIVCVIASTIPGISMSPIIEIAQDTLF</sequence>
<feature type="chain" id="PRO_0000344281" description="NAD(P)H-quinone oxidoreductase subunit 2 A, chloroplastic">
    <location>
        <begin position="1"/>
        <end position="510"/>
    </location>
</feature>
<feature type="transmembrane region" description="Helical" evidence="1">
    <location>
        <begin position="24"/>
        <end position="44"/>
    </location>
</feature>
<feature type="transmembrane region" description="Helical" evidence="1">
    <location>
        <begin position="57"/>
        <end position="77"/>
    </location>
</feature>
<feature type="transmembrane region" description="Helical" evidence="1">
    <location>
        <begin position="99"/>
        <end position="119"/>
    </location>
</feature>
<feature type="transmembrane region" description="Helical" evidence="1">
    <location>
        <begin position="124"/>
        <end position="144"/>
    </location>
</feature>
<feature type="transmembrane region" description="Helical" evidence="1">
    <location>
        <begin position="149"/>
        <end position="169"/>
    </location>
</feature>
<feature type="transmembrane region" description="Helical" evidence="1">
    <location>
        <begin position="183"/>
        <end position="203"/>
    </location>
</feature>
<feature type="transmembrane region" description="Helical" evidence="1">
    <location>
        <begin position="227"/>
        <end position="247"/>
    </location>
</feature>
<feature type="transmembrane region" description="Helical" evidence="1">
    <location>
        <begin position="295"/>
        <end position="315"/>
    </location>
</feature>
<feature type="transmembrane region" description="Helical" evidence="1">
    <location>
        <begin position="323"/>
        <end position="343"/>
    </location>
</feature>
<feature type="transmembrane region" description="Helical" evidence="1">
    <location>
        <begin position="354"/>
        <end position="374"/>
    </location>
</feature>
<feature type="transmembrane region" description="Helical" evidence="1">
    <location>
        <begin position="395"/>
        <end position="415"/>
    </location>
</feature>
<feature type="transmembrane region" description="Helical" evidence="1">
    <location>
        <begin position="418"/>
        <end position="438"/>
    </location>
</feature>
<feature type="transmembrane region" description="Helical" evidence="1">
    <location>
        <begin position="482"/>
        <end position="502"/>
    </location>
</feature>
<reference key="1">
    <citation type="journal article" date="2006" name="Science">
        <title>The genome of black cottonwood, Populus trichocarpa (Torr. &amp; Gray).</title>
        <authorList>
            <person name="Tuskan G.A."/>
            <person name="Difazio S."/>
            <person name="Jansson S."/>
            <person name="Bohlmann J."/>
            <person name="Grigoriev I."/>
            <person name="Hellsten U."/>
            <person name="Putnam N."/>
            <person name="Ralph S."/>
            <person name="Rombauts S."/>
            <person name="Salamov A."/>
            <person name="Schein J."/>
            <person name="Sterck L."/>
            <person name="Aerts A."/>
            <person name="Bhalerao R.R."/>
            <person name="Bhalerao R.P."/>
            <person name="Blaudez D."/>
            <person name="Boerjan W."/>
            <person name="Brun A."/>
            <person name="Brunner A."/>
            <person name="Busov V."/>
            <person name="Campbell M."/>
            <person name="Carlson J."/>
            <person name="Chalot M."/>
            <person name="Chapman J."/>
            <person name="Chen G.-L."/>
            <person name="Cooper D."/>
            <person name="Coutinho P.M."/>
            <person name="Couturier J."/>
            <person name="Covert S."/>
            <person name="Cronk Q."/>
            <person name="Cunningham R."/>
            <person name="Davis J."/>
            <person name="Degroeve S."/>
            <person name="Dejardin A."/>
            <person name="dePamphilis C.W."/>
            <person name="Detter J."/>
            <person name="Dirks B."/>
            <person name="Dubchak I."/>
            <person name="Duplessis S."/>
            <person name="Ehlting J."/>
            <person name="Ellis B."/>
            <person name="Gendler K."/>
            <person name="Goodstein D."/>
            <person name="Gribskov M."/>
            <person name="Grimwood J."/>
            <person name="Groover A."/>
            <person name="Gunter L."/>
            <person name="Hamberger B."/>
            <person name="Heinze B."/>
            <person name="Helariutta Y."/>
            <person name="Henrissat B."/>
            <person name="Holligan D."/>
            <person name="Holt R."/>
            <person name="Huang W."/>
            <person name="Islam-Faridi N."/>
            <person name="Jones S."/>
            <person name="Jones-Rhoades M."/>
            <person name="Jorgensen R."/>
            <person name="Joshi C."/>
            <person name="Kangasjaervi J."/>
            <person name="Karlsson J."/>
            <person name="Kelleher C."/>
            <person name="Kirkpatrick R."/>
            <person name="Kirst M."/>
            <person name="Kohler A."/>
            <person name="Kalluri U."/>
            <person name="Larimer F."/>
            <person name="Leebens-Mack J."/>
            <person name="Leple J.-C."/>
            <person name="Locascio P."/>
            <person name="Lou Y."/>
            <person name="Lucas S."/>
            <person name="Martin F."/>
            <person name="Montanini B."/>
            <person name="Napoli C."/>
            <person name="Nelson D.R."/>
            <person name="Nelson C."/>
            <person name="Nieminen K."/>
            <person name="Nilsson O."/>
            <person name="Pereda V."/>
            <person name="Peter G."/>
            <person name="Philippe R."/>
            <person name="Pilate G."/>
            <person name="Poliakov A."/>
            <person name="Razumovskaya J."/>
            <person name="Richardson P."/>
            <person name="Rinaldi C."/>
            <person name="Ritland K."/>
            <person name="Rouze P."/>
            <person name="Ryaboy D."/>
            <person name="Schmutz J."/>
            <person name="Schrader J."/>
            <person name="Segerman B."/>
            <person name="Shin H."/>
            <person name="Siddiqui A."/>
            <person name="Sterky F."/>
            <person name="Terry A."/>
            <person name="Tsai C.-J."/>
            <person name="Uberbacher E."/>
            <person name="Unneberg P."/>
            <person name="Vahala J."/>
            <person name="Wall K."/>
            <person name="Wessler S."/>
            <person name="Yang G."/>
            <person name="Yin T."/>
            <person name="Douglas C."/>
            <person name="Marra M."/>
            <person name="Sandberg G."/>
            <person name="Van de Peer Y."/>
            <person name="Rokhsar D.S."/>
        </authorList>
    </citation>
    <scope>NUCLEOTIDE SEQUENCE [LARGE SCALE GENOMIC DNA]</scope>
    <source>
        <strain>cv. Nisqually</strain>
    </source>
</reference>
<accession>P0CD34</accession>
<accession>A4GYV7</accession>